<dbReference type="EMBL" id="CP000738">
    <property type="protein sequence ID" value="ABR59855.1"/>
    <property type="molecule type" value="Genomic_DNA"/>
</dbReference>
<dbReference type="RefSeq" id="WP_011975183.1">
    <property type="nucleotide sequence ID" value="NC_009636.1"/>
</dbReference>
<dbReference type="RefSeq" id="YP_001326690.1">
    <property type="nucleotide sequence ID" value="NC_009636.1"/>
</dbReference>
<dbReference type="SMR" id="A6U875"/>
<dbReference type="STRING" id="366394.Smed_1002"/>
<dbReference type="GeneID" id="61614914"/>
<dbReference type="KEGG" id="smd:Smed_1002"/>
<dbReference type="PATRIC" id="fig|366394.8.peg.4123"/>
<dbReference type="eggNOG" id="COG0256">
    <property type="taxonomic scope" value="Bacteria"/>
</dbReference>
<dbReference type="HOGENOM" id="CLU_098841_0_1_5"/>
<dbReference type="OrthoDB" id="9810939at2"/>
<dbReference type="Proteomes" id="UP000001108">
    <property type="component" value="Chromosome"/>
</dbReference>
<dbReference type="GO" id="GO:0022625">
    <property type="term" value="C:cytosolic large ribosomal subunit"/>
    <property type="evidence" value="ECO:0007669"/>
    <property type="project" value="TreeGrafter"/>
</dbReference>
<dbReference type="GO" id="GO:0008097">
    <property type="term" value="F:5S rRNA binding"/>
    <property type="evidence" value="ECO:0007669"/>
    <property type="project" value="TreeGrafter"/>
</dbReference>
<dbReference type="GO" id="GO:0003735">
    <property type="term" value="F:structural constituent of ribosome"/>
    <property type="evidence" value="ECO:0007669"/>
    <property type="project" value="InterPro"/>
</dbReference>
<dbReference type="GO" id="GO:0006412">
    <property type="term" value="P:translation"/>
    <property type="evidence" value="ECO:0007669"/>
    <property type="project" value="UniProtKB-UniRule"/>
</dbReference>
<dbReference type="CDD" id="cd00432">
    <property type="entry name" value="Ribosomal_L18_L5e"/>
    <property type="match status" value="1"/>
</dbReference>
<dbReference type="FunFam" id="3.30.420.100:FF:000001">
    <property type="entry name" value="50S ribosomal protein L18"/>
    <property type="match status" value="1"/>
</dbReference>
<dbReference type="Gene3D" id="3.30.420.100">
    <property type="match status" value="1"/>
</dbReference>
<dbReference type="HAMAP" id="MF_01337_B">
    <property type="entry name" value="Ribosomal_uL18_B"/>
    <property type="match status" value="1"/>
</dbReference>
<dbReference type="InterPro" id="IPR004389">
    <property type="entry name" value="Ribosomal_uL18_bac-type"/>
</dbReference>
<dbReference type="InterPro" id="IPR005484">
    <property type="entry name" value="Ribosomal_uL18_bac/euk"/>
</dbReference>
<dbReference type="NCBIfam" id="TIGR00060">
    <property type="entry name" value="L18_bact"/>
    <property type="match status" value="1"/>
</dbReference>
<dbReference type="PANTHER" id="PTHR12899">
    <property type="entry name" value="39S RIBOSOMAL PROTEIN L18, MITOCHONDRIAL"/>
    <property type="match status" value="1"/>
</dbReference>
<dbReference type="PANTHER" id="PTHR12899:SF3">
    <property type="entry name" value="LARGE RIBOSOMAL SUBUNIT PROTEIN UL18M"/>
    <property type="match status" value="1"/>
</dbReference>
<dbReference type="Pfam" id="PF00861">
    <property type="entry name" value="Ribosomal_L18p"/>
    <property type="match status" value="1"/>
</dbReference>
<dbReference type="SUPFAM" id="SSF53137">
    <property type="entry name" value="Translational machinery components"/>
    <property type="match status" value="1"/>
</dbReference>
<accession>A6U875</accession>
<name>RL18_SINMW</name>
<reference key="1">
    <citation type="submission" date="2007-06" db="EMBL/GenBank/DDBJ databases">
        <title>Complete sequence of Sinorhizobium medicae WSM419 chromosome.</title>
        <authorList>
            <consortium name="US DOE Joint Genome Institute"/>
            <person name="Copeland A."/>
            <person name="Lucas S."/>
            <person name="Lapidus A."/>
            <person name="Barry K."/>
            <person name="Glavina del Rio T."/>
            <person name="Dalin E."/>
            <person name="Tice H."/>
            <person name="Pitluck S."/>
            <person name="Chain P."/>
            <person name="Malfatti S."/>
            <person name="Shin M."/>
            <person name="Vergez L."/>
            <person name="Schmutz J."/>
            <person name="Larimer F."/>
            <person name="Land M."/>
            <person name="Hauser L."/>
            <person name="Kyrpides N."/>
            <person name="Mikhailova N."/>
            <person name="Reeve W.G."/>
            <person name="Richardson P."/>
        </authorList>
    </citation>
    <scope>NUCLEOTIDE SEQUENCE [LARGE SCALE GENOMIC DNA]</scope>
    <source>
        <strain>WSM419</strain>
    </source>
</reference>
<organism>
    <name type="scientific">Sinorhizobium medicae (strain WSM419)</name>
    <name type="common">Ensifer medicae</name>
    <dbReference type="NCBI Taxonomy" id="366394"/>
    <lineage>
        <taxon>Bacteria</taxon>
        <taxon>Pseudomonadati</taxon>
        <taxon>Pseudomonadota</taxon>
        <taxon>Alphaproteobacteria</taxon>
        <taxon>Hyphomicrobiales</taxon>
        <taxon>Rhizobiaceae</taxon>
        <taxon>Sinorhizobium/Ensifer group</taxon>
        <taxon>Sinorhizobium</taxon>
    </lineage>
</organism>
<keyword id="KW-0687">Ribonucleoprotein</keyword>
<keyword id="KW-0689">Ribosomal protein</keyword>
<keyword id="KW-0694">RNA-binding</keyword>
<keyword id="KW-0699">rRNA-binding</keyword>
<sequence>MASRKDTLVRRASRVRRQIKAVANGRPRLSVHRSSKNIYAQIIDDVAGKTIASASTLDTDLRFSLKTGADTEAATAVGKLLAERASKAGVKDVVFDRGAFIYHGRIKALAEAAREGGLNF</sequence>
<evidence type="ECO:0000255" key="1">
    <source>
        <dbReference type="HAMAP-Rule" id="MF_01337"/>
    </source>
</evidence>
<evidence type="ECO:0000305" key="2"/>
<protein>
    <recommendedName>
        <fullName evidence="1">Large ribosomal subunit protein uL18</fullName>
    </recommendedName>
    <alternativeName>
        <fullName evidence="2">50S ribosomal protein L18</fullName>
    </alternativeName>
</protein>
<proteinExistence type="inferred from homology"/>
<comment type="function">
    <text evidence="1">This is one of the proteins that bind and probably mediate the attachment of the 5S RNA into the large ribosomal subunit, where it forms part of the central protuberance.</text>
</comment>
<comment type="subunit">
    <text evidence="1">Part of the 50S ribosomal subunit; part of the 5S rRNA/L5/L18/L25 subcomplex. Contacts the 5S and 23S rRNAs.</text>
</comment>
<comment type="similarity">
    <text evidence="1">Belongs to the universal ribosomal protein uL18 family.</text>
</comment>
<feature type="chain" id="PRO_1000053115" description="Large ribosomal subunit protein uL18">
    <location>
        <begin position="1"/>
        <end position="120"/>
    </location>
</feature>
<gene>
    <name evidence="1" type="primary">rplR</name>
    <name type="ordered locus">Smed_1002</name>
</gene>